<name>CLPX_BARBK</name>
<dbReference type="EMBL" id="CP000524">
    <property type="protein sequence ID" value="ABM44544.1"/>
    <property type="molecule type" value="Genomic_DNA"/>
</dbReference>
<dbReference type="RefSeq" id="WP_005766687.1">
    <property type="nucleotide sequence ID" value="NC_008783.1"/>
</dbReference>
<dbReference type="SMR" id="A1USA8"/>
<dbReference type="STRING" id="360095.BARBAKC583_0547"/>
<dbReference type="GeneID" id="4684370"/>
<dbReference type="KEGG" id="bbk:BARBAKC583_0547"/>
<dbReference type="PATRIC" id="fig|360095.6.peg.533"/>
<dbReference type="eggNOG" id="COG1219">
    <property type="taxonomic scope" value="Bacteria"/>
</dbReference>
<dbReference type="HOGENOM" id="CLU_014218_8_2_5"/>
<dbReference type="OrthoDB" id="9804062at2"/>
<dbReference type="Proteomes" id="UP000000643">
    <property type="component" value="Chromosome"/>
</dbReference>
<dbReference type="GO" id="GO:0009376">
    <property type="term" value="C:HslUV protease complex"/>
    <property type="evidence" value="ECO:0007669"/>
    <property type="project" value="TreeGrafter"/>
</dbReference>
<dbReference type="GO" id="GO:0005524">
    <property type="term" value="F:ATP binding"/>
    <property type="evidence" value="ECO:0007669"/>
    <property type="project" value="UniProtKB-UniRule"/>
</dbReference>
<dbReference type="GO" id="GO:0016887">
    <property type="term" value="F:ATP hydrolysis activity"/>
    <property type="evidence" value="ECO:0007669"/>
    <property type="project" value="InterPro"/>
</dbReference>
<dbReference type="GO" id="GO:0140662">
    <property type="term" value="F:ATP-dependent protein folding chaperone"/>
    <property type="evidence" value="ECO:0007669"/>
    <property type="project" value="InterPro"/>
</dbReference>
<dbReference type="GO" id="GO:0046983">
    <property type="term" value="F:protein dimerization activity"/>
    <property type="evidence" value="ECO:0007669"/>
    <property type="project" value="InterPro"/>
</dbReference>
<dbReference type="GO" id="GO:0051082">
    <property type="term" value="F:unfolded protein binding"/>
    <property type="evidence" value="ECO:0007669"/>
    <property type="project" value="UniProtKB-UniRule"/>
</dbReference>
<dbReference type="GO" id="GO:0008270">
    <property type="term" value="F:zinc ion binding"/>
    <property type="evidence" value="ECO:0007669"/>
    <property type="project" value="InterPro"/>
</dbReference>
<dbReference type="GO" id="GO:0051301">
    <property type="term" value="P:cell division"/>
    <property type="evidence" value="ECO:0007669"/>
    <property type="project" value="TreeGrafter"/>
</dbReference>
<dbReference type="GO" id="GO:0051603">
    <property type="term" value="P:proteolysis involved in protein catabolic process"/>
    <property type="evidence" value="ECO:0007669"/>
    <property type="project" value="TreeGrafter"/>
</dbReference>
<dbReference type="CDD" id="cd19497">
    <property type="entry name" value="RecA-like_ClpX"/>
    <property type="match status" value="1"/>
</dbReference>
<dbReference type="FunFam" id="1.10.8.60:FF:000002">
    <property type="entry name" value="ATP-dependent Clp protease ATP-binding subunit ClpX"/>
    <property type="match status" value="1"/>
</dbReference>
<dbReference type="FunFam" id="3.40.50.300:FF:000005">
    <property type="entry name" value="ATP-dependent Clp protease ATP-binding subunit ClpX"/>
    <property type="match status" value="1"/>
</dbReference>
<dbReference type="Gene3D" id="1.10.8.60">
    <property type="match status" value="1"/>
</dbReference>
<dbReference type="Gene3D" id="6.20.220.10">
    <property type="entry name" value="ClpX chaperone, C4-type zinc finger domain"/>
    <property type="match status" value="1"/>
</dbReference>
<dbReference type="Gene3D" id="3.40.50.300">
    <property type="entry name" value="P-loop containing nucleotide triphosphate hydrolases"/>
    <property type="match status" value="1"/>
</dbReference>
<dbReference type="HAMAP" id="MF_00175">
    <property type="entry name" value="ClpX"/>
    <property type="match status" value="1"/>
</dbReference>
<dbReference type="InterPro" id="IPR003593">
    <property type="entry name" value="AAA+_ATPase"/>
</dbReference>
<dbReference type="InterPro" id="IPR050052">
    <property type="entry name" value="ATP-dep_Clp_protease_ClpX"/>
</dbReference>
<dbReference type="InterPro" id="IPR003959">
    <property type="entry name" value="ATPase_AAA_core"/>
</dbReference>
<dbReference type="InterPro" id="IPR019489">
    <property type="entry name" value="Clp_ATPase_C"/>
</dbReference>
<dbReference type="InterPro" id="IPR004487">
    <property type="entry name" value="Clp_protease_ATP-bd_su_ClpX"/>
</dbReference>
<dbReference type="InterPro" id="IPR046425">
    <property type="entry name" value="ClpX_bact"/>
</dbReference>
<dbReference type="InterPro" id="IPR027417">
    <property type="entry name" value="P-loop_NTPase"/>
</dbReference>
<dbReference type="InterPro" id="IPR010603">
    <property type="entry name" value="Znf_CppX_C4"/>
</dbReference>
<dbReference type="InterPro" id="IPR038366">
    <property type="entry name" value="Znf_CppX_C4_sf"/>
</dbReference>
<dbReference type="NCBIfam" id="TIGR00382">
    <property type="entry name" value="clpX"/>
    <property type="match status" value="1"/>
</dbReference>
<dbReference type="NCBIfam" id="NF003745">
    <property type="entry name" value="PRK05342.1"/>
    <property type="match status" value="1"/>
</dbReference>
<dbReference type="PANTHER" id="PTHR48102:SF7">
    <property type="entry name" value="ATP-DEPENDENT CLP PROTEASE ATP-BINDING SUBUNIT CLPX-LIKE, MITOCHONDRIAL"/>
    <property type="match status" value="1"/>
</dbReference>
<dbReference type="PANTHER" id="PTHR48102">
    <property type="entry name" value="ATP-DEPENDENT CLP PROTEASE ATP-BINDING SUBUNIT CLPX-LIKE, MITOCHONDRIAL-RELATED"/>
    <property type="match status" value="1"/>
</dbReference>
<dbReference type="Pfam" id="PF07724">
    <property type="entry name" value="AAA_2"/>
    <property type="match status" value="1"/>
</dbReference>
<dbReference type="Pfam" id="PF10431">
    <property type="entry name" value="ClpB_D2-small"/>
    <property type="match status" value="1"/>
</dbReference>
<dbReference type="Pfam" id="PF06689">
    <property type="entry name" value="zf-C4_ClpX"/>
    <property type="match status" value="1"/>
</dbReference>
<dbReference type="SMART" id="SM00382">
    <property type="entry name" value="AAA"/>
    <property type="match status" value="1"/>
</dbReference>
<dbReference type="SMART" id="SM01086">
    <property type="entry name" value="ClpB_D2-small"/>
    <property type="match status" value="1"/>
</dbReference>
<dbReference type="SMART" id="SM00994">
    <property type="entry name" value="zf-C4_ClpX"/>
    <property type="match status" value="1"/>
</dbReference>
<dbReference type="SUPFAM" id="SSF57716">
    <property type="entry name" value="Glucocorticoid receptor-like (DNA-binding domain)"/>
    <property type="match status" value="1"/>
</dbReference>
<dbReference type="SUPFAM" id="SSF52540">
    <property type="entry name" value="P-loop containing nucleoside triphosphate hydrolases"/>
    <property type="match status" value="1"/>
</dbReference>
<dbReference type="PROSITE" id="PS51902">
    <property type="entry name" value="CLPX_ZB"/>
    <property type="match status" value="1"/>
</dbReference>
<reference key="1">
    <citation type="submission" date="2006-12" db="EMBL/GenBank/DDBJ databases">
        <authorList>
            <person name="Hendrix L."/>
            <person name="Mohamoud Y."/>
            <person name="Radune D."/>
            <person name="Shvartsbeyn A."/>
            <person name="Daugherty S."/>
            <person name="Dodson R."/>
            <person name="Durkin A.S."/>
            <person name="Harkins D."/>
            <person name="Huot H."/>
            <person name="Kothari S.P."/>
            <person name="Madupu R."/>
            <person name="Li J."/>
            <person name="Nelson W.C."/>
            <person name="Shrivastava S."/>
            <person name="Giglio M.G."/>
            <person name="Haft D."/>
            <person name="Selengut J."/>
            <person name="Fraser-Ligget C."/>
            <person name="Seshadri R."/>
        </authorList>
    </citation>
    <scope>NUCLEOTIDE SEQUENCE [LARGE SCALE GENOMIC DNA]</scope>
    <source>
        <strain>ATCC 35685 / KC583 / Herrer 020/F12,63</strain>
    </source>
</reference>
<accession>A1USA8</accession>
<comment type="function">
    <text evidence="1">ATP-dependent specificity component of the Clp protease. It directs the protease to specific substrates. Can perform chaperone functions in the absence of ClpP.</text>
</comment>
<comment type="subunit">
    <text evidence="1">Component of the ClpX-ClpP complex. Forms a hexameric ring that, in the presence of ATP, binds to fourteen ClpP subunits assembled into a disk-like structure with a central cavity, resembling the structure of eukaryotic proteasomes.</text>
</comment>
<comment type="similarity">
    <text evidence="1">Belongs to the ClpX chaperone family.</text>
</comment>
<feature type="chain" id="PRO_1000024518" description="ATP-dependent Clp protease ATP-binding subunit ClpX">
    <location>
        <begin position="1"/>
        <end position="424"/>
    </location>
</feature>
<feature type="domain" description="ClpX-type ZB" evidence="2">
    <location>
        <begin position="5"/>
        <end position="58"/>
    </location>
</feature>
<feature type="binding site" evidence="2">
    <location>
        <position position="17"/>
    </location>
    <ligand>
        <name>Zn(2+)</name>
        <dbReference type="ChEBI" id="CHEBI:29105"/>
    </ligand>
</feature>
<feature type="binding site" evidence="2">
    <location>
        <position position="20"/>
    </location>
    <ligand>
        <name>Zn(2+)</name>
        <dbReference type="ChEBI" id="CHEBI:29105"/>
    </ligand>
</feature>
<feature type="binding site" evidence="2">
    <location>
        <position position="39"/>
    </location>
    <ligand>
        <name>Zn(2+)</name>
        <dbReference type="ChEBI" id="CHEBI:29105"/>
    </ligand>
</feature>
<feature type="binding site" evidence="2">
    <location>
        <position position="42"/>
    </location>
    <ligand>
        <name>Zn(2+)</name>
        <dbReference type="ChEBI" id="CHEBI:29105"/>
    </ligand>
</feature>
<feature type="binding site" evidence="1">
    <location>
        <begin position="121"/>
        <end position="128"/>
    </location>
    <ligand>
        <name>ATP</name>
        <dbReference type="ChEBI" id="CHEBI:30616"/>
    </ligand>
</feature>
<gene>
    <name evidence="1" type="primary">clpX</name>
    <name type="ordered locus">BARBAKC583_0547</name>
</gene>
<keyword id="KW-0067">ATP-binding</keyword>
<keyword id="KW-0143">Chaperone</keyword>
<keyword id="KW-0479">Metal-binding</keyword>
<keyword id="KW-0547">Nucleotide-binding</keyword>
<keyword id="KW-0862">Zinc</keyword>
<proteinExistence type="inferred from homology"/>
<protein>
    <recommendedName>
        <fullName evidence="1">ATP-dependent Clp protease ATP-binding subunit ClpX</fullName>
    </recommendedName>
</protein>
<organism>
    <name type="scientific">Bartonella bacilliformis (strain ATCC 35685 / KC583 / Herrer 020/F12,63)</name>
    <dbReference type="NCBI Taxonomy" id="360095"/>
    <lineage>
        <taxon>Bacteria</taxon>
        <taxon>Pseudomonadati</taxon>
        <taxon>Pseudomonadota</taxon>
        <taxon>Alphaproteobacteria</taxon>
        <taxon>Hyphomicrobiales</taxon>
        <taxon>Bartonellaceae</taxon>
        <taxon>Bartonella</taxon>
    </lineage>
</organism>
<sequence>MSKVSNSGSEPKNTLYCSFCGKSQHEVRKLIAGPTVFICDECVELCMDIIREENKSSGIKTRDGVPTPQEIIEVLDDYVIGQRYAKRVLSVAVHNHYKRLAHQSKNNAIELAKSNILLVGPTGCGKTYLAQTLARIIDVPFTMADATTLTEAGYVGEDVENIILKLLQSADYNVERAQRGIVYIDEVDKISRKADNPSITRDVSGEGVQQALLKIMEGTIASVPPQGGRKHPQQEFLQVDTTNILFICGGAFAGLERIISGRGEKTSIGFSATIKAPDERRVGEIFHDLEPEDLVKFGLIPEFIGRLPIIATLEDLDIDALVRILSQPKNALVKQYQHLFEMENVELTFHEDALRAIANKAIERKTGARGLRSIMEKILLDTMFELPALEGVQKVVISSDVVEGKARPLYIYSERVEDKENVSA</sequence>
<evidence type="ECO:0000255" key="1">
    <source>
        <dbReference type="HAMAP-Rule" id="MF_00175"/>
    </source>
</evidence>
<evidence type="ECO:0000255" key="2">
    <source>
        <dbReference type="PROSITE-ProRule" id="PRU01250"/>
    </source>
</evidence>